<sequence>MLVLTETSVGFVVFKLSSDAKIDNKDLWKEFETPEGANKALKVQAIQRFTSTASAVEDLTAVQDGRLTDSLSRFLLDTVGGADDGEKKKKKKKIEEMLVVSDPKLAGTINKALSIPVLSDSSTQDLYRGIRQQLASLLGGVDQKDLNTMSLGLGHSLSRFKLKFSTDKVDTMVIQAIALLDDLDKEINIYAMRVKEWYGWHFPEMAKIIVDNIAFARVVKAMGFRTNAVTTDFSLLLPEDLEATLKSAAELSMGTEISDSDMTHIHSLCDQVISISEYRTQLSEYLRNRMQAIAPNLTALVGELVGARLISHAGSLMNLAKHPASTVQILGAEKALFRALKTKHDTPKYGLIYHASLIGQAPQKLKGKMARMVATKAALSIRVDALSDADSRSDVSAAEVGISNRVKLESRLRALEHQAGIQSVRKVVSANGQQGRQQPRFEMSGVTGSYNAATDNVPLNGDLLPTQPATEEVKEEKDEKKDKKDKKKKRKSEVAEAGDVTMDGDADLSMVAGETKEERRARKEAKKAAKAAKKAAEESGDGDKKSKKRRADEDEDSEKKKKKKKKDE</sequence>
<feature type="chain" id="PRO_0000350982" description="Nucleolar protein 58">
    <location>
        <begin position="1"/>
        <end position="568"/>
    </location>
</feature>
<feature type="domain" description="Nop" evidence="2">
    <location>
        <begin position="293"/>
        <end position="417"/>
    </location>
</feature>
<feature type="region of interest" description="Disordered" evidence="3">
    <location>
        <begin position="430"/>
        <end position="568"/>
    </location>
</feature>
<feature type="compositionally biased region" description="Basic and acidic residues" evidence="3">
    <location>
        <begin position="471"/>
        <end position="482"/>
    </location>
</feature>
<feature type="compositionally biased region" description="Basic residues" evidence="3">
    <location>
        <begin position="522"/>
        <end position="533"/>
    </location>
</feature>
<feature type="compositionally biased region" description="Basic and acidic residues" evidence="3">
    <location>
        <begin position="534"/>
        <end position="544"/>
    </location>
</feature>
<protein>
    <recommendedName>
        <fullName>Nucleolar protein 58</fullName>
    </recommendedName>
</protein>
<accession>P0CP26</accession>
<accession>Q55Q74</accession>
<accession>Q5KFZ2</accession>
<organism>
    <name type="scientific">Cryptococcus neoformans var. neoformans serotype D (strain JEC21 / ATCC MYA-565)</name>
    <name type="common">Filobasidiella neoformans</name>
    <dbReference type="NCBI Taxonomy" id="214684"/>
    <lineage>
        <taxon>Eukaryota</taxon>
        <taxon>Fungi</taxon>
        <taxon>Dikarya</taxon>
        <taxon>Basidiomycota</taxon>
        <taxon>Agaricomycotina</taxon>
        <taxon>Tremellomycetes</taxon>
        <taxon>Tremellales</taxon>
        <taxon>Cryptococcaceae</taxon>
        <taxon>Cryptococcus</taxon>
        <taxon>Cryptococcus neoformans species complex</taxon>
    </lineage>
</organism>
<gene>
    <name type="primary">NOP58</name>
    <name type="ordered locus">CNF00090</name>
</gene>
<keyword id="KW-0539">Nucleus</keyword>
<keyword id="KW-1185">Reference proteome</keyword>
<keyword id="KW-0687">Ribonucleoprotein</keyword>
<keyword id="KW-0690">Ribosome biogenesis</keyword>
<keyword id="KW-0698">rRNA processing</keyword>
<comment type="function">
    <text evidence="1">Required for pre-18S rRNA processing. May bind microtubules (By similarity).</text>
</comment>
<comment type="subcellular location">
    <subcellularLocation>
        <location evidence="1">Nucleus</location>
        <location evidence="1">Nucleolus</location>
    </subcellularLocation>
</comment>
<comment type="similarity">
    <text evidence="4">Belongs to the NOP5/NOP56 family.</text>
</comment>
<evidence type="ECO:0000250" key="1"/>
<evidence type="ECO:0000255" key="2">
    <source>
        <dbReference type="PROSITE-ProRule" id="PRU00690"/>
    </source>
</evidence>
<evidence type="ECO:0000256" key="3">
    <source>
        <dbReference type="SAM" id="MobiDB-lite"/>
    </source>
</evidence>
<evidence type="ECO:0000305" key="4"/>
<proteinExistence type="inferred from homology"/>
<name>NOP58_CRYNJ</name>
<dbReference type="EMBL" id="AE017346">
    <property type="protein sequence ID" value="AAW43972.1"/>
    <property type="molecule type" value="Genomic_DNA"/>
</dbReference>
<dbReference type="RefSeq" id="XP_571279.1">
    <property type="nucleotide sequence ID" value="XM_571279.1"/>
</dbReference>
<dbReference type="SMR" id="P0CP26"/>
<dbReference type="FunCoup" id="P0CP26">
    <property type="interactions" value="798"/>
</dbReference>
<dbReference type="STRING" id="214684.P0CP26"/>
<dbReference type="PaxDb" id="214684-P0CP26"/>
<dbReference type="EnsemblFungi" id="AAW43972">
    <property type="protein sequence ID" value="AAW43972"/>
    <property type="gene ID" value="CNF00090"/>
</dbReference>
<dbReference type="GeneID" id="3258236"/>
<dbReference type="KEGG" id="cne:CNF00090"/>
<dbReference type="VEuPathDB" id="FungiDB:CNF00090"/>
<dbReference type="eggNOG" id="KOG2572">
    <property type="taxonomic scope" value="Eukaryota"/>
</dbReference>
<dbReference type="HOGENOM" id="CLU_015495_5_2_1"/>
<dbReference type="InParanoid" id="P0CP26"/>
<dbReference type="OMA" id="MGMRSNW"/>
<dbReference type="OrthoDB" id="6780543at2759"/>
<dbReference type="Proteomes" id="UP000002149">
    <property type="component" value="Chromosome 6"/>
</dbReference>
<dbReference type="GO" id="GO:0031428">
    <property type="term" value="C:box C/D methylation guide snoRNP complex"/>
    <property type="evidence" value="ECO:0000318"/>
    <property type="project" value="GO_Central"/>
</dbReference>
<dbReference type="GO" id="GO:0005730">
    <property type="term" value="C:nucleolus"/>
    <property type="evidence" value="ECO:0007669"/>
    <property type="project" value="UniProtKB-SubCell"/>
</dbReference>
<dbReference type="GO" id="GO:0032040">
    <property type="term" value="C:small-subunit processome"/>
    <property type="evidence" value="ECO:0000318"/>
    <property type="project" value="GO_Central"/>
</dbReference>
<dbReference type="GO" id="GO:0030515">
    <property type="term" value="F:snoRNA binding"/>
    <property type="evidence" value="ECO:0000318"/>
    <property type="project" value="GO_Central"/>
</dbReference>
<dbReference type="GO" id="GO:0006364">
    <property type="term" value="P:rRNA processing"/>
    <property type="evidence" value="ECO:0007669"/>
    <property type="project" value="UniProtKB-KW"/>
</dbReference>
<dbReference type="FunFam" id="1.10.246.90:FF:000003">
    <property type="entry name" value="Nucleolar protein 58"/>
    <property type="match status" value="1"/>
</dbReference>
<dbReference type="FunFam" id="1.10.287.4070:FF:000001">
    <property type="entry name" value="Probable Nucleolar protein 58"/>
    <property type="match status" value="1"/>
</dbReference>
<dbReference type="Gene3D" id="1.10.287.4070">
    <property type="match status" value="1"/>
</dbReference>
<dbReference type="Gene3D" id="1.10.246.90">
    <property type="entry name" value="Nop domain"/>
    <property type="match status" value="1"/>
</dbReference>
<dbReference type="InterPro" id="IPR045056">
    <property type="entry name" value="Nop56/Nop58"/>
</dbReference>
<dbReference type="InterPro" id="IPR012974">
    <property type="entry name" value="NOP58/56_N"/>
</dbReference>
<dbReference type="InterPro" id="IPR042239">
    <property type="entry name" value="Nop_C"/>
</dbReference>
<dbReference type="InterPro" id="IPR002687">
    <property type="entry name" value="Nop_dom"/>
</dbReference>
<dbReference type="InterPro" id="IPR036070">
    <property type="entry name" value="Nop_dom_sf"/>
</dbReference>
<dbReference type="InterPro" id="IPR012976">
    <property type="entry name" value="NOSIC"/>
</dbReference>
<dbReference type="PANTHER" id="PTHR10894">
    <property type="entry name" value="NUCLEOLAR PROTEIN 5 NUCLEOLAR PROTEIN NOP5 NOP58"/>
    <property type="match status" value="1"/>
</dbReference>
<dbReference type="PANTHER" id="PTHR10894:SF1">
    <property type="entry name" value="NUCLEOLAR PROTEIN 58"/>
    <property type="match status" value="1"/>
</dbReference>
<dbReference type="Pfam" id="PF01798">
    <property type="entry name" value="Nop"/>
    <property type="match status" value="1"/>
</dbReference>
<dbReference type="Pfam" id="PF08156">
    <property type="entry name" value="NOP5NT"/>
    <property type="match status" value="1"/>
</dbReference>
<dbReference type="SMART" id="SM00931">
    <property type="entry name" value="NOSIC"/>
    <property type="match status" value="1"/>
</dbReference>
<dbReference type="SUPFAM" id="SSF89124">
    <property type="entry name" value="Nop domain"/>
    <property type="match status" value="1"/>
</dbReference>
<dbReference type="PROSITE" id="PS51358">
    <property type="entry name" value="NOP"/>
    <property type="match status" value="1"/>
</dbReference>
<reference key="1">
    <citation type="journal article" date="2005" name="Science">
        <title>The genome of the basidiomycetous yeast and human pathogen Cryptococcus neoformans.</title>
        <authorList>
            <person name="Loftus B.J."/>
            <person name="Fung E."/>
            <person name="Roncaglia P."/>
            <person name="Rowley D."/>
            <person name="Amedeo P."/>
            <person name="Bruno D."/>
            <person name="Vamathevan J."/>
            <person name="Miranda M."/>
            <person name="Anderson I.J."/>
            <person name="Fraser J.A."/>
            <person name="Allen J.E."/>
            <person name="Bosdet I.E."/>
            <person name="Brent M.R."/>
            <person name="Chiu R."/>
            <person name="Doering T.L."/>
            <person name="Donlin M.J."/>
            <person name="D'Souza C.A."/>
            <person name="Fox D.S."/>
            <person name="Grinberg V."/>
            <person name="Fu J."/>
            <person name="Fukushima M."/>
            <person name="Haas B.J."/>
            <person name="Huang J.C."/>
            <person name="Janbon G."/>
            <person name="Jones S.J.M."/>
            <person name="Koo H.L."/>
            <person name="Krzywinski M.I."/>
            <person name="Kwon-Chung K.J."/>
            <person name="Lengeler K.B."/>
            <person name="Maiti R."/>
            <person name="Marra M.A."/>
            <person name="Marra R.E."/>
            <person name="Mathewson C.A."/>
            <person name="Mitchell T.G."/>
            <person name="Pertea M."/>
            <person name="Riggs F.R."/>
            <person name="Salzberg S.L."/>
            <person name="Schein J.E."/>
            <person name="Shvartsbeyn A."/>
            <person name="Shin H."/>
            <person name="Shumway M."/>
            <person name="Specht C.A."/>
            <person name="Suh B.B."/>
            <person name="Tenney A."/>
            <person name="Utterback T.R."/>
            <person name="Wickes B.L."/>
            <person name="Wortman J.R."/>
            <person name="Wye N.H."/>
            <person name="Kronstad J.W."/>
            <person name="Lodge J.K."/>
            <person name="Heitman J."/>
            <person name="Davis R.W."/>
            <person name="Fraser C.M."/>
            <person name="Hyman R.W."/>
        </authorList>
    </citation>
    <scope>NUCLEOTIDE SEQUENCE [LARGE SCALE GENOMIC DNA]</scope>
    <source>
        <strain>JEC21 / ATCC MYA-565</strain>
    </source>
</reference>